<name>RLMD_BURP1</name>
<feature type="chain" id="PRO_0000229871" description="23S rRNA (uracil(1939)-C(5))-methyltransferase RlmD">
    <location>
        <begin position="1"/>
        <end position="465"/>
    </location>
</feature>
<feature type="domain" description="TRAM" evidence="1">
    <location>
        <begin position="16"/>
        <end position="80"/>
    </location>
</feature>
<feature type="region of interest" description="Disordered" evidence="2">
    <location>
        <begin position="1"/>
        <end position="24"/>
    </location>
</feature>
<feature type="active site" description="Nucleophile" evidence="1">
    <location>
        <position position="421"/>
    </location>
</feature>
<feature type="binding site" evidence="1">
    <location>
        <position position="93"/>
    </location>
    <ligand>
        <name>[4Fe-4S] cluster</name>
        <dbReference type="ChEBI" id="CHEBI:49883"/>
    </ligand>
</feature>
<feature type="binding site" evidence="1">
    <location>
        <position position="99"/>
    </location>
    <ligand>
        <name>[4Fe-4S] cluster</name>
        <dbReference type="ChEBI" id="CHEBI:49883"/>
    </ligand>
</feature>
<feature type="binding site" evidence="1">
    <location>
        <position position="102"/>
    </location>
    <ligand>
        <name>[4Fe-4S] cluster</name>
        <dbReference type="ChEBI" id="CHEBI:49883"/>
    </ligand>
</feature>
<feature type="binding site" evidence="1">
    <location>
        <position position="181"/>
    </location>
    <ligand>
        <name>[4Fe-4S] cluster</name>
        <dbReference type="ChEBI" id="CHEBI:49883"/>
    </ligand>
</feature>
<feature type="binding site" evidence="1">
    <location>
        <position position="289"/>
    </location>
    <ligand>
        <name>S-adenosyl-L-methionine</name>
        <dbReference type="ChEBI" id="CHEBI:59789"/>
    </ligand>
</feature>
<feature type="binding site" evidence="1">
    <location>
        <position position="318"/>
    </location>
    <ligand>
        <name>S-adenosyl-L-methionine</name>
        <dbReference type="ChEBI" id="CHEBI:59789"/>
    </ligand>
</feature>
<feature type="binding site" evidence="1">
    <location>
        <position position="323"/>
    </location>
    <ligand>
        <name>S-adenosyl-L-methionine</name>
        <dbReference type="ChEBI" id="CHEBI:59789"/>
    </ligand>
</feature>
<feature type="binding site" evidence="1">
    <location>
        <position position="339"/>
    </location>
    <ligand>
        <name>S-adenosyl-L-methionine</name>
        <dbReference type="ChEBI" id="CHEBI:59789"/>
    </ligand>
</feature>
<feature type="binding site" evidence="1">
    <location>
        <position position="367"/>
    </location>
    <ligand>
        <name>S-adenosyl-L-methionine</name>
        <dbReference type="ChEBI" id="CHEBI:59789"/>
    </ligand>
</feature>
<feature type="binding site" evidence="1">
    <location>
        <position position="388"/>
    </location>
    <ligand>
        <name>S-adenosyl-L-methionine</name>
        <dbReference type="ChEBI" id="CHEBI:59789"/>
    </ligand>
</feature>
<proteinExistence type="inferred from homology"/>
<organism>
    <name type="scientific">Burkholderia pseudomallei (strain 1710b)</name>
    <dbReference type="NCBI Taxonomy" id="320372"/>
    <lineage>
        <taxon>Bacteria</taxon>
        <taxon>Pseudomonadati</taxon>
        <taxon>Pseudomonadota</taxon>
        <taxon>Betaproteobacteria</taxon>
        <taxon>Burkholderiales</taxon>
        <taxon>Burkholderiaceae</taxon>
        <taxon>Burkholderia</taxon>
        <taxon>pseudomallei group</taxon>
    </lineage>
</organism>
<protein>
    <recommendedName>
        <fullName evidence="1">23S rRNA (uracil(1939)-C(5))-methyltransferase RlmD</fullName>
        <ecNumber evidence="1">2.1.1.190</ecNumber>
    </recommendedName>
    <alternativeName>
        <fullName evidence="1">23S rRNA(m5U1939)-methyltransferase</fullName>
    </alternativeName>
</protein>
<comment type="function">
    <text evidence="1">Catalyzes the formation of 5-methyl-uridine at position 1939 (m5U1939) in 23S rRNA.</text>
</comment>
<comment type="catalytic activity">
    <reaction evidence="1">
        <text>uridine(1939) in 23S rRNA + S-adenosyl-L-methionine = 5-methyluridine(1939) in 23S rRNA + S-adenosyl-L-homocysteine + H(+)</text>
        <dbReference type="Rhea" id="RHEA:42908"/>
        <dbReference type="Rhea" id="RHEA-COMP:10278"/>
        <dbReference type="Rhea" id="RHEA-COMP:10279"/>
        <dbReference type="ChEBI" id="CHEBI:15378"/>
        <dbReference type="ChEBI" id="CHEBI:57856"/>
        <dbReference type="ChEBI" id="CHEBI:59789"/>
        <dbReference type="ChEBI" id="CHEBI:65315"/>
        <dbReference type="ChEBI" id="CHEBI:74447"/>
        <dbReference type="EC" id="2.1.1.190"/>
    </reaction>
</comment>
<comment type="similarity">
    <text evidence="1">Belongs to the class I-like SAM-binding methyltransferase superfamily. RNA M5U methyltransferase family. RlmD subfamily.</text>
</comment>
<comment type="sequence caution" evidence="3">
    <conflict type="erroneous initiation">
        <sequence resource="EMBL-CDS" id="ABA49568"/>
    </conflict>
</comment>
<sequence>MSEAVPLSTRRASSAGDAPGRAPVLDIDSLDMEARGVGRVVDENGEPGKVIFVEGALPGERVTYSSFRRKPTYEQAQVVDILRPSVMRTQPKCAFFGTCGGCSMQHLDMRAQVAIKQRVLEDNLWHLAKLRAEAMFAPIHGPSWGYRYRARLTVRHVAKKGGVLVGFHEKKSSYVADMTSCEVLPPHVSAMLVPLRRLVEQLSIRDRMPQIELAVGARVTALVLRVLEPINAADEALLREFADTHRVQFWLQPKGPDTVAPFYPLDAQLDYTLPEFGIRMPFKPTDFTQVNHQINRVLVGRALRLLAPERGDRVLDLFCGIGNFTLPLARLAREVVGIEGSDALTARALENAKENGVDGHTSFACRNLFEVTADDLRALGAFDKFLVDPPREGALAVSKALAEIAQSGAGPLPARIVYVSCNPSTLARDAGLLVHEAGYRLKGAGVVNMFPHTSHVESIALFERD</sequence>
<evidence type="ECO:0000255" key="1">
    <source>
        <dbReference type="HAMAP-Rule" id="MF_01010"/>
    </source>
</evidence>
<evidence type="ECO:0000256" key="2">
    <source>
        <dbReference type="SAM" id="MobiDB-lite"/>
    </source>
</evidence>
<evidence type="ECO:0000305" key="3"/>
<gene>
    <name evidence="1" type="primary">rlmD</name>
    <name type="synonym">rumA</name>
    <name type="ordered locus">BURPS1710b_2360</name>
</gene>
<dbReference type="EC" id="2.1.1.190" evidence="1"/>
<dbReference type="EMBL" id="CP000124">
    <property type="protein sequence ID" value="ABA49568.1"/>
    <property type="status" value="ALT_INIT"/>
    <property type="molecule type" value="Genomic_DNA"/>
</dbReference>
<dbReference type="RefSeq" id="WP_004192701.1">
    <property type="nucleotide sequence ID" value="NC_007434.1"/>
</dbReference>
<dbReference type="SMR" id="Q3JRP8"/>
<dbReference type="EnsemblBacteria" id="ABA49568">
    <property type="protein sequence ID" value="ABA49568"/>
    <property type="gene ID" value="BURPS1710b_2360"/>
</dbReference>
<dbReference type="GeneID" id="93060481"/>
<dbReference type="KEGG" id="bpm:BURPS1710b_2360"/>
<dbReference type="HOGENOM" id="CLU_014689_8_2_4"/>
<dbReference type="Proteomes" id="UP000002700">
    <property type="component" value="Chromosome I"/>
</dbReference>
<dbReference type="GO" id="GO:0051539">
    <property type="term" value="F:4 iron, 4 sulfur cluster binding"/>
    <property type="evidence" value="ECO:0007669"/>
    <property type="project" value="UniProtKB-KW"/>
</dbReference>
<dbReference type="GO" id="GO:0005506">
    <property type="term" value="F:iron ion binding"/>
    <property type="evidence" value="ECO:0007669"/>
    <property type="project" value="UniProtKB-UniRule"/>
</dbReference>
<dbReference type="GO" id="GO:0003723">
    <property type="term" value="F:RNA binding"/>
    <property type="evidence" value="ECO:0007669"/>
    <property type="project" value="InterPro"/>
</dbReference>
<dbReference type="GO" id="GO:0070041">
    <property type="term" value="F:rRNA (uridine-C5-)-methyltransferase activity"/>
    <property type="evidence" value="ECO:0007669"/>
    <property type="project" value="UniProtKB-UniRule"/>
</dbReference>
<dbReference type="GO" id="GO:0070475">
    <property type="term" value="P:rRNA base methylation"/>
    <property type="evidence" value="ECO:0007669"/>
    <property type="project" value="TreeGrafter"/>
</dbReference>
<dbReference type="CDD" id="cd02440">
    <property type="entry name" value="AdoMet_MTases"/>
    <property type="match status" value="1"/>
</dbReference>
<dbReference type="Gene3D" id="2.40.50.1070">
    <property type="match status" value="1"/>
</dbReference>
<dbReference type="Gene3D" id="2.40.50.140">
    <property type="entry name" value="Nucleic acid-binding proteins"/>
    <property type="match status" value="1"/>
</dbReference>
<dbReference type="Gene3D" id="3.40.50.150">
    <property type="entry name" value="Vaccinia Virus protein VP39"/>
    <property type="match status" value="1"/>
</dbReference>
<dbReference type="HAMAP" id="MF_01010">
    <property type="entry name" value="23SrRNA_methyltr_RlmD"/>
    <property type="match status" value="1"/>
</dbReference>
<dbReference type="InterPro" id="IPR001566">
    <property type="entry name" value="23S_rRNA_MeTrfase_RlmD"/>
</dbReference>
<dbReference type="InterPro" id="IPR030391">
    <property type="entry name" value="MeTrfase_TrmA_CS"/>
</dbReference>
<dbReference type="InterPro" id="IPR012340">
    <property type="entry name" value="NA-bd_OB-fold"/>
</dbReference>
<dbReference type="InterPro" id="IPR029063">
    <property type="entry name" value="SAM-dependent_MTases_sf"/>
</dbReference>
<dbReference type="InterPro" id="IPR002792">
    <property type="entry name" value="TRAM_dom"/>
</dbReference>
<dbReference type="InterPro" id="IPR010280">
    <property type="entry name" value="U5_MeTrfase_fam"/>
</dbReference>
<dbReference type="NCBIfam" id="NF009639">
    <property type="entry name" value="PRK13168.1"/>
    <property type="match status" value="1"/>
</dbReference>
<dbReference type="PANTHER" id="PTHR11061:SF49">
    <property type="entry name" value="23S RRNA (URACIL(1939)-C(5))-METHYLTRANSFERASE RLMD"/>
    <property type="match status" value="1"/>
</dbReference>
<dbReference type="PANTHER" id="PTHR11061">
    <property type="entry name" value="RNA M5U METHYLTRANSFERASE"/>
    <property type="match status" value="1"/>
</dbReference>
<dbReference type="Pfam" id="PF05958">
    <property type="entry name" value="tRNA_U5-meth_tr"/>
    <property type="match status" value="1"/>
</dbReference>
<dbReference type="SUPFAM" id="SSF50249">
    <property type="entry name" value="Nucleic acid-binding proteins"/>
    <property type="match status" value="1"/>
</dbReference>
<dbReference type="SUPFAM" id="SSF53335">
    <property type="entry name" value="S-adenosyl-L-methionine-dependent methyltransferases"/>
    <property type="match status" value="1"/>
</dbReference>
<dbReference type="PROSITE" id="PS51687">
    <property type="entry name" value="SAM_MT_RNA_M5U"/>
    <property type="match status" value="1"/>
</dbReference>
<dbReference type="PROSITE" id="PS50926">
    <property type="entry name" value="TRAM"/>
    <property type="match status" value="1"/>
</dbReference>
<dbReference type="PROSITE" id="PS01231">
    <property type="entry name" value="TRMA_2"/>
    <property type="match status" value="1"/>
</dbReference>
<accession>Q3JRP8</accession>
<reference key="1">
    <citation type="journal article" date="2010" name="Genome Biol. Evol.">
        <title>Continuing evolution of Burkholderia mallei through genome reduction and large-scale rearrangements.</title>
        <authorList>
            <person name="Losada L."/>
            <person name="Ronning C.M."/>
            <person name="DeShazer D."/>
            <person name="Woods D."/>
            <person name="Fedorova N."/>
            <person name="Kim H.S."/>
            <person name="Shabalina S.A."/>
            <person name="Pearson T.R."/>
            <person name="Brinkac L."/>
            <person name="Tan P."/>
            <person name="Nandi T."/>
            <person name="Crabtree J."/>
            <person name="Badger J."/>
            <person name="Beckstrom-Sternberg S."/>
            <person name="Saqib M."/>
            <person name="Schutzer S.E."/>
            <person name="Keim P."/>
            <person name="Nierman W.C."/>
        </authorList>
    </citation>
    <scope>NUCLEOTIDE SEQUENCE [LARGE SCALE GENOMIC DNA]</scope>
    <source>
        <strain>1710b</strain>
    </source>
</reference>
<keyword id="KW-0004">4Fe-4S</keyword>
<keyword id="KW-0408">Iron</keyword>
<keyword id="KW-0411">Iron-sulfur</keyword>
<keyword id="KW-0479">Metal-binding</keyword>
<keyword id="KW-0489">Methyltransferase</keyword>
<keyword id="KW-0698">rRNA processing</keyword>
<keyword id="KW-0949">S-adenosyl-L-methionine</keyword>
<keyword id="KW-0808">Transferase</keyword>